<organism>
    <name type="scientific">Rhodospirillum rubrum (strain ATCC 11170 / ATH 1.1.1 / DSM 467 / LMG 4362 / NCIMB 8255 / S1)</name>
    <dbReference type="NCBI Taxonomy" id="269796"/>
    <lineage>
        <taxon>Bacteria</taxon>
        <taxon>Pseudomonadati</taxon>
        <taxon>Pseudomonadota</taxon>
        <taxon>Alphaproteobacteria</taxon>
        <taxon>Rhodospirillales</taxon>
        <taxon>Rhodospirillaceae</taxon>
        <taxon>Rhodospirillum</taxon>
    </lineage>
</organism>
<evidence type="ECO:0000255" key="1">
    <source>
        <dbReference type="HAMAP-Rule" id="MF_01393"/>
    </source>
</evidence>
<gene>
    <name evidence="1" type="primary">atpB</name>
    <name type="ordered locus">Rru_A3246</name>
</gene>
<keyword id="KW-0066">ATP synthesis</keyword>
<keyword id="KW-0997">Cell inner membrane</keyword>
<keyword id="KW-1003">Cell membrane</keyword>
<keyword id="KW-0138">CF(0)</keyword>
<keyword id="KW-0375">Hydrogen ion transport</keyword>
<keyword id="KW-0406">Ion transport</keyword>
<keyword id="KW-0472">Membrane</keyword>
<keyword id="KW-1185">Reference proteome</keyword>
<keyword id="KW-0812">Transmembrane</keyword>
<keyword id="KW-1133">Transmembrane helix</keyword>
<keyword id="KW-0813">Transport</keyword>
<proteinExistence type="inferred from homology"/>
<protein>
    <recommendedName>
        <fullName evidence="1">ATP synthase subunit a</fullName>
    </recommendedName>
    <alternativeName>
        <fullName evidence="1">ATP synthase F0 sector subunit a</fullName>
    </alternativeName>
    <alternativeName>
        <fullName evidence="1">F-ATPase subunit 6</fullName>
    </alternativeName>
</protein>
<name>ATP6_RHORT</name>
<feature type="chain" id="PRO_0000362422" description="ATP synthase subunit a">
    <location>
        <begin position="1"/>
        <end position="241"/>
    </location>
</feature>
<feature type="transmembrane region" description="Helical" evidence="1">
    <location>
        <begin position="23"/>
        <end position="43"/>
    </location>
</feature>
<feature type="transmembrane region" description="Helical" evidence="1">
    <location>
        <begin position="83"/>
        <end position="103"/>
    </location>
</feature>
<feature type="transmembrane region" description="Helical" evidence="1">
    <location>
        <begin position="113"/>
        <end position="133"/>
    </location>
</feature>
<feature type="transmembrane region" description="Helical" evidence="1">
    <location>
        <begin position="188"/>
        <end position="208"/>
    </location>
</feature>
<feature type="transmembrane region" description="Helical" evidence="1">
    <location>
        <begin position="209"/>
        <end position="229"/>
    </location>
</feature>
<dbReference type="EMBL" id="CP000230">
    <property type="protein sequence ID" value="ABC24041.1"/>
    <property type="molecule type" value="Genomic_DNA"/>
</dbReference>
<dbReference type="RefSeq" id="WP_011390994.1">
    <property type="nucleotide sequence ID" value="NC_007643.1"/>
</dbReference>
<dbReference type="RefSeq" id="YP_428328.1">
    <property type="nucleotide sequence ID" value="NC_007643.1"/>
</dbReference>
<dbReference type="SMR" id="Q2RPA4"/>
<dbReference type="STRING" id="269796.Rru_A3246"/>
<dbReference type="EnsemblBacteria" id="ABC24041">
    <property type="protein sequence ID" value="ABC24041"/>
    <property type="gene ID" value="Rru_A3246"/>
</dbReference>
<dbReference type="KEGG" id="rru:Rru_A3246"/>
<dbReference type="PATRIC" id="fig|269796.9.peg.3360"/>
<dbReference type="eggNOG" id="COG0356">
    <property type="taxonomic scope" value="Bacteria"/>
</dbReference>
<dbReference type="HOGENOM" id="CLU_041018_0_2_5"/>
<dbReference type="PhylomeDB" id="Q2RPA4"/>
<dbReference type="Proteomes" id="UP000001929">
    <property type="component" value="Chromosome"/>
</dbReference>
<dbReference type="GO" id="GO:0005886">
    <property type="term" value="C:plasma membrane"/>
    <property type="evidence" value="ECO:0007669"/>
    <property type="project" value="UniProtKB-SubCell"/>
</dbReference>
<dbReference type="GO" id="GO:0045259">
    <property type="term" value="C:proton-transporting ATP synthase complex"/>
    <property type="evidence" value="ECO:0007669"/>
    <property type="project" value="UniProtKB-KW"/>
</dbReference>
<dbReference type="GO" id="GO:0046933">
    <property type="term" value="F:proton-transporting ATP synthase activity, rotational mechanism"/>
    <property type="evidence" value="ECO:0007669"/>
    <property type="project" value="UniProtKB-UniRule"/>
</dbReference>
<dbReference type="CDD" id="cd00310">
    <property type="entry name" value="ATP-synt_Fo_a_6"/>
    <property type="match status" value="1"/>
</dbReference>
<dbReference type="FunFam" id="1.20.120.220:FF:000003">
    <property type="entry name" value="ATP synthase subunit a"/>
    <property type="match status" value="1"/>
</dbReference>
<dbReference type="Gene3D" id="1.20.120.220">
    <property type="entry name" value="ATP synthase, F0 complex, subunit A"/>
    <property type="match status" value="1"/>
</dbReference>
<dbReference type="HAMAP" id="MF_01393">
    <property type="entry name" value="ATP_synth_a_bact"/>
    <property type="match status" value="1"/>
</dbReference>
<dbReference type="InterPro" id="IPR000568">
    <property type="entry name" value="ATP_synth_F0_asu"/>
</dbReference>
<dbReference type="InterPro" id="IPR023011">
    <property type="entry name" value="ATP_synth_F0_asu_AS"/>
</dbReference>
<dbReference type="InterPro" id="IPR045083">
    <property type="entry name" value="ATP_synth_F0_asu_bact/mt"/>
</dbReference>
<dbReference type="InterPro" id="IPR035908">
    <property type="entry name" value="F0_ATP_A_sf"/>
</dbReference>
<dbReference type="NCBIfam" id="TIGR01131">
    <property type="entry name" value="ATP_synt_6_or_A"/>
    <property type="match status" value="1"/>
</dbReference>
<dbReference type="NCBIfam" id="NF004482">
    <property type="entry name" value="PRK05815.2-4"/>
    <property type="match status" value="1"/>
</dbReference>
<dbReference type="PANTHER" id="PTHR11410">
    <property type="entry name" value="ATP SYNTHASE SUBUNIT A"/>
    <property type="match status" value="1"/>
</dbReference>
<dbReference type="PANTHER" id="PTHR11410:SF0">
    <property type="entry name" value="ATP SYNTHASE SUBUNIT A"/>
    <property type="match status" value="1"/>
</dbReference>
<dbReference type="Pfam" id="PF00119">
    <property type="entry name" value="ATP-synt_A"/>
    <property type="match status" value="1"/>
</dbReference>
<dbReference type="PRINTS" id="PR00123">
    <property type="entry name" value="ATPASEA"/>
</dbReference>
<dbReference type="SUPFAM" id="SSF81336">
    <property type="entry name" value="F1F0 ATP synthase subunit A"/>
    <property type="match status" value="1"/>
</dbReference>
<dbReference type="PROSITE" id="PS00449">
    <property type="entry name" value="ATPASE_A"/>
    <property type="match status" value="1"/>
</dbReference>
<reference key="1">
    <citation type="journal article" date="2011" name="Stand. Genomic Sci.">
        <title>Complete genome sequence of Rhodospirillum rubrum type strain (S1).</title>
        <authorList>
            <person name="Munk A.C."/>
            <person name="Copeland A."/>
            <person name="Lucas S."/>
            <person name="Lapidus A."/>
            <person name="Del Rio T.G."/>
            <person name="Barry K."/>
            <person name="Detter J.C."/>
            <person name="Hammon N."/>
            <person name="Israni S."/>
            <person name="Pitluck S."/>
            <person name="Brettin T."/>
            <person name="Bruce D."/>
            <person name="Han C."/>
            <person name="Tapia R."/>
            <person name="Gilna P."/>
            <person name="Schmutz J."/>
            <person name="Larimer F."/>
            <person name="Land M."/>
            <person name="Kyrpides N.C."/>
            <person name="Mavromatis K."/>
            <person name="Richardson P."/>
            <person name="Rohde M."/>
            <person name="Goeker M."/>
            <person name="Klenk H.P."/>
            <person name="Zhang Y."/>
            <person name="Roberts G.P."/>
            <person name="Reslewic S."/>
            <person name="Schwartz D.C."/>
        </authorList>
    </citation>
    <scope>NUCLEOTIDE SEQUENCE [LARGE SCALE GENOMIC DNA]</scope>
    <source>
        <strain>ATCC 11170 / ATH 1.1.1 / DSM 467 / LMG 4362 / NCIMB 8255 / S1</strain>
    </source>
</reference>
<accession>Q2RPA4</accession>
<sequence>MHSPVEQFAIKPLVSIQVAGVDVSFTNSSLLMLLTVGLAAAFFWNATARRTLIPGRLQSAAEMLYEFVANMIRDNVGKEGMKYFPYILTLFVFVFLGNMLGMLPYSFTFTSHIAVTAALAVGIFIAVTIIGFARHGFHYFRMFFPHGAPLLTAPLLIPIELISYLSRPFSLSVRLFANMTVGHIMLKVLAGFVIMLGVVGGVVPFAVVLGVTVLEFFIAALQAYVFTILTCIYLNDAINMH</sequence>
<comment type="function">
    <text evidence="1">Key component of the proton channel; it plays a direct role in the translocation of protons across the membrane.</text>
</comment>
<comment type="subunit">
    <text evidence="1">F-type ATPases have 2 components, CF(1) - the catalytic core - and CF(0) - the membrane proton channel. CF(1) has five subunits: alpha(3), beta(3), gamma(1), delta(1), epsilon(1). CF(0) has four main subunits: a, b, b' and c.</text>
</comment>
<comment type="subcellular location">
    <subcellularLocation>
        <location evidence="1">Cell inner membrane</location>
        <topology evidence="1">Multi-pass membrane protein</topology>
    </subcellularLocation>
</comment>
<comment type="similarity">
    <text evidence="1">Belongs to the ATPase A chain family.</text>
</comment>